<gene>
    <name evidence="13" type="primary">caly</name>
    <name evidence="11 13" type="synonym">BAP1</name>
    <name evidence="13" type="ORF">CG8445</name>
</gene>
<protein>
    <recommendedName>
        <fullName evidence="11">Ubiquitin carboxyl-terminal hydrolase calypso</fullName>
        <ecNumber evidence="6 7 8 9">3.4.19.12</ecNumber>
    </recommendedName>
    <alternativeName>
        <fullName evidence="11">BRCA1-associated protein 1 homolog</fullName>
        <shortName evidence="12">BAP1 homolog</shortName>
    </alternativeName>
    <alternativeName>
        <fullName evidence="10">Polycomb group protein calypso</fullName>
    </alternativeName>
</protein>
<reference key="1">
    <citation type="journal article" date="2000" name="Science">
        <title>The genome sequence of Drosophila melanogaster.</title>
        <authorList>
            <person name="Adams M.D."/>
            <person name="Celniker S.E."/>
            <person name="Holt R.A."/>
            <person name="Evans C.A."/>
            <person name="Gocayne J.D."/>
            <person name="Amanatides P.G."/>
            <person name="Scherer S.E."/>
            <person name="Li P.W."/>
            <person name="Hoskins R.A."/>
            <person name="Galle R.F."/>
            <person name="George R.A."/>
            <person name="Lewis S.E."/>
            <person name="Richards S."/>
            <person name="Ashburner M."/>
            <person name="Henderson S.N."/>
            <person name="Sutton G.G."/>
            <person name="Wortman J.R."/>
            <person name="Yandell M.D."/>
            <person name="Zhang Q."/>
            <person name="Chen L.X."/>
            <person name="Brandon R.C."/>
            <person name="Rogers Y.-H.C."/>
            <person name="Blazej R.G."/>
            <person name="Champe M."/>
            <person name="Pfeiffer B.D."/>
            <person name="Wan K.H."/>
            <person name="Doyle C."/>
            <person name="Baxter E.G."/>
            <person name="Helt G."/>
            <person name="Nelson C.R."/>
            <person name="Miklos G.L.G."/>
            <person name="Abril J.F."/>
            <person name="Agbayani A."/>
            <person name="An H.-J."/>
            <person name="Andrews-Pfannkoch C."/>
            <person name="Baldwin D."/>
            <person name="Ballew R.M."/>
            <person name="Basu A."/>
            <person name="Baxendale J."/>
            <person name="Bayraktaroglu L."/>
            <person name="Beasley E.M."/>
            <person name="Beeson K.Y."/>
            <person name="Benos P.V."/>
            <person name="Berman B.P."/>
            <person name="Bhandari D."/>
            <person name="Bolshakov S."/>
            <person name="Borkova D."/>
            <person name="Botchan M.R."/>
            <person name="Bouck J."/>
            <person name="Brokstein P."/>
            <person name="Brottier P."/>
            <person name="Burtis K.C."/>
            <person name="Busam D.A."/>
            <person name="Butler H."/>
            <person name="Cadieu E."/>
            <person name="Center A."/>
            <person name="Chandra I."/>
            <person name="Cherry J.M."/>
            <person name="Cawley S."/>
            <person name="Dahlke C."/>
            <person name="Davenport L.B."/>
            <person name="Davies P."/>
            <person name="de Pablos B."/>
            <person name="Delcher A."/>
            <person name="Deng Z."/>
            <person name="Mays A.D."/>
            <person name="Dew I."/>
            <person name="Dietz S.M."/>
            <person name="Dodson K."/>
            <person name="Doup L.E."/>
            <person name="Downes M."/>
            <person name="Dugan-Rocha S."/>
            <person name="Dunkov B.C."/>
            <person name="Dunn P."/>
            <person name="Durbin K.J."/>
            <person name="Evangelista C.C."/>
            <person name="Ferraz C."/>
            <person name="Ferriera S."/>
            <person name="Fleischmann W."/>
            <person name="Fosler C."/>
            <person name="Gabrielian A.E."/>
            <person name="Garg N.S."/>
            <person name="Gelbart W.M."/>
            <person name="Glasser K."/>
            <person name="Glodek A."/>
            <person name="Gong F."/>
            <person name="Gorrell J.H."/>
            <person name="Gu Z."/>
            <person name="Guan P."/>
            <person name="Harris M."/>
            <person name="Harris N.L."/>
            <person name="Harvey D.A."/>
            <person name="Heiman T.J."/>
            <person name="Hernandez J.R."/>
            <person name="Houck J."/>
            <person name="Hostin D."/>
            <person name="Houston K.A."/>
            <person name="Howland T.J."/>
            <person name="Wei M.-H."/>
            <person name="Ibegwam C."/>
            <person name="Jalali M."/>
            <person name="Kalush F."/>
            <person name="Karpen G.H."/>
            <person name="Ke Z."/>
            <person name="Kennison J.A."/>
            <person name="Ketchum K.A."/>
            <person name="Kimmel B.E."/>
            <person name="Kodira C.D."/>
            <person name="Kraft C.L."/>
            <person name="Kravitz S."/>
            <person name="Kulp D."/>
            <person name="Lai Z."/>
            <person name="Lasko P."/>
            <person name="Lei Y."/>
            <person name="Levitsky A.A."/>
            <person name="Li J.H."/>
            <person name="Li Z."/>
            <person name="Liang Y."/>
            <person name="Lin X."/>
            <person name="Liu X."/>
            <person name="Mattei B."/>
            <person name="McIntosh T.C."/>
            <person name="McLeod M.P."/>
            <person name="McPherson D."/>
            <person name="Merkulov G."/>
            <person name="Milshina N.V."/>
            <person name="Mobarry C."/>
            <person name="Morris J."/>
            <person name="Moshrefi A."/>
            <person name="Mount S.M."/>
            <person name="Moy M."/>
            <person name="Murphy B."/>
            <person name="Murphy L."/>
            <person name="Muzny D.M."/>
            <person name="Nelson D.L."/>
            <person name="Nelson D.R."/>
            <person name="Nelson K.A."/>
            <person name="Nixon K."/>
            <person name="Nusskern D.R."/>
            <person name="Pacleb J.M."/>
            <person name="Palazzolo M."/>
            <person name="Pittman G.S."/>
            <person name="Pan S."/>
            <person name="Pollard J."/>
            <person name="Puri V."/>
            <person name="Reese M.G."/>
            <person name="Reinert K."/>
            <person name="Remington K."/>
            <person name="Saunders R.D.C."/>
            <person name="Scheeler F."/>
            <person name="Shen H."/>
            <person name="Shue B.C."/>
            <person name="Siden-Kiamos I."/>
            <person name="Simpson M."/>
            <person name="Skupski M.P."/>
            <person name="Smith T.J."/>
            <person name="Spier E."/>
            <person name="Spradling A.C."/>
            <person name="Stapleton M."/>
            <person name="Strong R."/>
            <person name="Sun E."/>
            <person name="Svirskas R."/>
            <person name="Tector C."/>
            <person name="Turner R."/>
            <person name="Venter E."/>
            <person name="Wang A.H."/>
            <person name="Wang X."/>
            <person name="Wang Z.-Y."/>
            <person name="Wassarman D.A."/>
            <person name="Weinstock G.M."/>
            <person name="Weissenbach J."/>
            <person name="Williams S.M."/>
            <person name="Woodage T."/>
            <person name="Worley K.C."/>
            <person name="Wu D."/>
            <person name="Yang S."/>
            <person name="Yao Q.A."/>
            <person name="Ye J."/>
            <person name="Yeh R.-F."/>
            <person name="Zaveri J.S."/>
            <person name="Zhan M."/>
            <person name="Zhang G."/>
            <person name="Zhao Q."/>
            <person name="Zheng L."/>
            <person name="Zheng X.H."/>
            <person name="Zhong F.N."/>
            <person name="Zhong W."/>
            <person name="Zhou X."/>
            <person name="Zhu S.C."/>
            <person name="Zhu X."/>
            <person name="Smith H.O."/>
            <person name="Gibbs R.A."/>
            <person name="Myers E.W."/>
            <person name="Rubin G.M."/>
            <person name="Venter J.C."/>
        </authorList>
    </citation>
    <scope>NUCLEOTIDE SEQUENCE [LARGE SCALE GENOMIC DNA]</scope>
    <source>
        <strain>Berkeley</strain>
    </source>
</reference>
<reference key="2">
    <citation type="journal article" date="2002" name="Genome Biol.">
        <title>Annotation of the Drosophila melanogaster euchromatic genome: a systematic review.</title>
        <authorList>
            <person name="Misra S."/>
            <person name="Crosby M.A."/>
            <person name="Mungall C.J."/>
            <person name="Matthews B.B."/>
            <person name="Campbell K.S."/>
            <person name="Hradecky P."/>
            <person name="Huang Y."/>
            <person name="Kaminker J.S."/>
            <person name="Millburn G.H."/>
            <person name="Prochnik S.E."/>
            <person name="Smith C.D."/>
            <person name="Tupy J.L."/>
            <person name="Whitfield E.J."/>
            <person name="Bayraktaroglu L."/>
            <person name="Berman B.P."/>
            <person name="Bettencourt B.R."/>
            <person name="Celniker S.E."/>
            <person name="de Grey A.D.N.J."/>
            <person name="Drysdale R.A."/>
            <person name="Harris N.L."/>
            <person name="Richter J."/>
            <person name="Russo S."/>
            <person name="Schroeder A.J."/>
            <person name="Shu S.Q."/>
            <person name="Stapleton M."/>
            <person name="Yamada C."/>
            <person name="Ashburner M."/>
            <person name="Gelbart W.M."/>
            <person name="Rubin G.M."/>
            <person name="Lewis S.E."/>
        </authorList>
    </citation>
    <scope>GENOME REANNOTATION</scope>
    <source>
        <strain>Berkeley</strain>
    </source>
</reference>
<reference key="3">
    <citation type="journal article" date="2002" name="Genome Biol.">
        <title>A Drosophila full-length cDNA resource.</title>
        <authorList>
            <person name="Stapleton M."/>
            <person name="Carlson J.W."/>
            <person name="Brokstein P."/>
            <person name="Yu C."/>
            <person name="Champe M."/>
            <person name="George R.A."/>
            <person name="Guarin H."/>
            <person name="Kronmiller B."/>
            <person name="Pacleb J.M."/>
            <person name="Park S."/>
            <person name="Wan K.H."/>
            <person name="Rubin G.M."/>
            <person name="Celniker S.E."/>
        </authorList>
    </citation>
    <scope>NUCLEOTIDE SEQUENCE [LARGE SCALE MRNA]</scope>
    <source>
        <strain>Berkeley</strain>
        <tissue>Head</tissue>
    </source>
</reference>
<reference key="4">
    <citation type="journal article" date="2007" name="Genetics">
        <title>A genetic screen identifies novel polycomb group genes in Drosophila.</title>
        <authorList>
            <person name="Gaytan de Ayala Alonso A."/>
            <person name="Gutierrez L."/>
            <person name="Fritsch C."/>
            <person name="Papp B."/>
            <person name="Beuchle D."/>
            <person name="Muller J."/>
        </authorList>
    </citation>
    <scope>FUNCTION</scope>
    <scope>DISRUPTION PHENOTYPE</scope>
</reference>
<reference key="5">
    <citation type="journal article" date="2010" name="Nature">
        <title>Histone H2A deubiquitinase activity of the Polycomb repressive complex PR-DUB.</title>
        <authorList>
            <person name="Scheuermann J.C."/>
            <person name="de Ayala Alonso A.G."/>
            <person name="Oktaba K."/>
            <person name="Ly-Hartig N."/>
            <person name="McGinty R.K."/>
            <person name="Fraterman S."/>
            <person name="Wilm M."/>
            <person name="Muir T.W."/>
            <person name="Muller J."/>
        </authorList>
    </citation>
    <scope>FUNCTION</scope>
    <scope>CATALYTIC ACTIVITY</scope>
    <scope>SUBCELLULAR LOCATION</scope>
    <scope>IDENTIFICATION IN THE PR-DUB COMPLEX</scope>
    <scope>INTERACTION WITH ASX</scope>
    <scope>MUTAGENESIS OF CYS-131</scope>
    <scope>DISRUPTION PHENOTYPE</scope>
</reference>
<reference key="6">
    <citation type="journal article" date="2022" name="Genome Biol.">
        <title>MBD5 and MBD6 stabilize the BAP1 complex and promote BAP1-dependent cancer.</title>
        <authorList>
            <person name="Tsuboyama N."/>
            <person name="Szczepanski A.P."/>
            <person name="Zhao Z."/>
            <person name="Wang L."/>
        </authorList>
    </citation>
    <scope>FUNCTION</scope>
    <scope>CATALYTIC ACTIVITY</scope>
    <scope>IDENTIFICATION IN THE PR-DUB COMPLEX</scope>
    <scope>IDENTIFICATION BY MASS SPECTROMETRY</scope>
</reference>
<reference evidence="14" key="7">
    <citation type="journal article" date="2018" name="Nat. Commun.">
        <title>A bidentate Polycomb Repressive-Deubiquitinase complex is required for efficient activity on nucleosomes.</title>
        <authorList>
            <person name="Foglizzo M."/>
            <person name="Middleton A.J."/>
            <person name="Burgess A.E."/>
            <person name="Crowther J.M."/>
            <person name="Dobson R.C.J."/>
            <person name="Murphy J.M."/>
            <person name="Day C.L."/>
            <person name="Mace P.D."/>
        </authorList>
    </citation>
    <scope>X-RAY CRYSTALLOGRAPHY (3.5 ANGSTROMS) OF 43-404 IN COMPLEX WITH ASX</scope>
    <scope>FUNCTION</scope>
    <scope>CATALYTIC ACTIVITY</scope>
    <scope>BIOPHYSICOCHEMICAL PROPERTIES</scope>
    <scope>HOMODIMER</scope>
    <scope>INTERACTION WITH ASX AND NUCLEOSOMES</scope>
    <scope>MUTAGENESIS OF GLU-72; TYR-74; CYS-131; MET-164; PHE-269; MET-288; ASN-292; LEU-340 AND 405-LYS--LYS-471</scope>
</reference>
<reference evidence="15" key="8">
    <citation type="journal article" date="2019" name="Structure">
        <title>Structural Basis for the Activation of the Deubiquitinase Calypso by the Polycomb Protein ASX.</title>
        <authorList>
            <person name="De I."/>
            <person name="Chittock E.C."/>
            <person name="Groetsch H."/>
            <person name="Miller T.C.R."/>
            <person name="McCarthy A.A."/>
            <person name="Mueller C.W."/>
        </authorList>
    </citation>
    <scope>X-RAY CRYSTALLOGRAPHY (3.0 ANGSTROMS) OF 43-404 IN COMPLEX WITH ASX</scope>
    <scope>FUNCTION</scope>
    <scope>CATALYTIC ACTIVITY</scope>
    <scope>INTERACTION WITH ASX AND NUCLEOSOMES</scope>
    <scope>MUTAGENESIS OF CYS-131</scope>
</reference>
<organism evidence="16">
    <name type="scientific">Drosophila melanogaster</name>
    <name type="common">Fruit fly</name>
    <dbReference type="NCBI Taxonomy" id="7227"/>
    <lineage>
        <taxon>Eukaryota</taxon>
        <taxon>Metazoa</taxon>
        <taxon>Ecdysozoa</taxon>
        <taxon>Arthropoda</taxon>
        <taxon>Hexapoda</taxon>
        <taxon>Insecta</taxon>
        <taxon>Pterygota</taxon>
        <taxon>Neoptera</taxon>
        <taxon>Endopterygota</taxon>
        <taxon>Diptera</taxon>
        <taxon>Brachycera</taxon>
        <taxon>Muscomorpha</taxon>
        <taxon>Ephydroidea</taxon>
        <taxon>Drosophilidae</taxon>
        <taxon>Drosophila</taxon>
        <taxon>Sophophora</taxon>
    </lineage>
</organism>
<sequence length="471" mass="51507">MNAAGGGSGAQAAAVAAGNNSLSHNALLSTASGATTMPMAQLADGWLELESDPGLFTLLLKDFGCHDVQVEEVYDLQKPIESPYGFIFLFRWIEERRARRKIVETTAEIFVKDEEAISSIFFAQQVVPNSCATHALLSVLLNCNENNLQLGDTLSRLKTHTKGMSPENKGLAIGNTPELACAHNSHAMPQARRRLERTGAGVSSCRFTGEAFHFVSFVPINGQLFELDGLKPYPMNHGGWEDSEDWTDKFRRVMAERLGIATGEQDIRFNLMAVVPDRRIAITHKLKMLRTNQAIVSGTLQKLLKADEQGESGNGDSQRPDTPTTLLEPSAFTARDLQSLLKNLDTEIAINEQHLADENDRRHMFKVDASRRTHNYDKFICTFLSMLAHQGVLGELVSQHLLPSKKVSGQGAANRISKQSTTASAGGSTAAGTASTPKTQQQQAAAAKNGKSPSKTPGRRRKGRNKCRKRK</sequence>
<comment type="function">
    <text evidence="5 6 7 8 9">Catalytic component of the polycomb repressive deubiquitinase (PR-DUB) complex, a complex that specifically mediates deubiquitination of histone H2A monoubiquitinated at 'Lys-119' (H2AK118ub1) (PubMed:20436459, PubMed:30258054, PubMed:30639226, PubMed:36180891). Mediates bisymmetric organization of the PR-DUB complex and is involved in association with nucleosomes to mediate deubiquitination (PubMed:30258054). Does not deubiquitinate monoubiquitinated histone H2B (PubMed:20436459). Required to maintain the transcriptionally repressive state of homeotic genes throughout development (PubMed:20436459). The PR-DUB complex has weak or no activity toward 'Lys-48'- and 'Lys-63'-linked polyubiquitin chains (PubMed:20436459). Polycomb group (PcG) protein (PubMed:17717194).</text>
</comment>
<comment type="catalytic activity">
    <reaction evidence="6 7 8 9">
        <text>Thiol-dependent hydrolysis of ester, thioester, amide, peptide and isopeptide bonds formed by the C-terminal Gly of ubiquitin (a 76-residue protein attached to proteins as an intracellular targeting signal).</text>
        <dbReference type="EC" id="3.4.19.12"/>
    </reaction>
</comment>
<comment type="biophysicochemical properties">
    <kinetics>
        <KM evidence="7">3.2 uM for ubiquitin-7-amido-4-methylcoumarin (UB-AMC)</KM>
    </kinetics>
</comment>
<comment type="subunit">
    <text evidence="6 7 8 9">Catalytic component of the polycomb repressive deubiquitinase (PR-DUB) complex, at least composed of caly/calypso, Asx and sba (MBD5/6 homolog) (PubMed:20436459, PubMed:36180891). The PR-DUB complex associates with nucleosomes to mediate deubiquitination of histone H2AK118ub1 substrates; the association requires the positively charged C-terminal tail of caly, probably due to direct binding of DNA (PubMed:30258054, PubMed:30639226). Interacts (via ULD domain) with Asx (via DEUBAD domain); the interaction produces a stable heterodimer with a composite binding site for ubiquitin (PubMed:30258054, PubMed:30639226). Homodimerizes (via coiled-coil hinge-region between the UCH and ULD domains) to mediate assembly of 2 copies of the caly-Asx heterodimer into a bisymmetric tetramer; dimerization enhances PR-DUB association with nucleosomes (PubMed:30258054).</text>
</comment>
<comment type="interaction">
    <interactant intactId="EBI-15851838">
        <id>Q7K5N4</id>
    </interactant>
    <interactant intactId="EBI-103394">
        <id>Q9V727</id>
        <label>Asx</label>
    </interactant>
    <organismsDiffer>false</organismsDiffer>
    <experiments>2</experiments>
</comment>
<comment type="subcellular location">
    <subcellularLocation>
        <location evidence="6">Nucleus</location>
    </subcellularLocation>
    <text evidence="6">Localizes to PcG response elements (PREs).</text>
</comment>
<comment type="disruption phenotype">
    <text evidence="5 6">Polycomb phenotype leading to lethality, probably due to misexpression of homeotic genes.</text>
</comment>
<comment type="similarity">
    <text evidence="12">Belongs to the peptidase C12 family. BAP1 subfamily.</text>
</comment>
<evidence type="ECO:0000255" key="1"/>
<evidence type="ECO:0000255" key="2">
    <source>
        <dbReference type="PROSITE-ProRule" id="PRU01393"/>
    </source>
</evidence>
<evidence type="ECO:0000255" key="3">
    <source>
        <dbReference type="PROSITE-ProRule" id="PRU01394"/>
    </source>
</evidence>
<evidence type="ECO:0000256" key="4">
    <source>
        <dbReference type="SAM" id="MobiDB-lite"/>
    </source>
</evidence>
<evidence type="ECO:0000269" key="5">
    <source>
    </source>
</evidence>
<evidence type="ECO:0000269" key="6">
    <source>
    </source>
</evidence>
<evidence type="ECO:0000269" key="7">
    <source>
    </source>
</evidence>
<evidence type="ECO:0000269" key="8">
    <source>
    </source>
</evidence>
<evidence type="ECO:0000269" key="9">
    <source>
    </source>
</evidence>
<evidence type="ECO:0000303" key="10">
    <source>
    </source>
</evidence>
<evidence type="ECO:0000303" key="11">
    <source>
    </source>
</evidence>
<evidence type="ECO:0000305" key="12"/>
<evidence type="ECO:0000312" key="13">
    <source>
        <dbReference type="FlyBase" id="FBgn0262166"/>
    </source>
</evidence>
<evidence type="ECO:0000312" key="14">
    <source>
        <dbReference type="PDB" id="6CGA"/>
    </source>
</evidence>
<evidence type="ECO:0000312" key="15">
    <source>
        <dbReference type="PDB" id="6HGC"/>
    </source>
</evidence>
<evidence type="ECO:0000312" key="16">
    <source>
        <dbReference type="Proteomes" id="UP000000803"/>
    </source>
</evidence>
<evidence type="ECO:0007829" key="17">
    <source>
        <dbReference type="PDB" id="6CGA"/>
    </source>
</evidence>
<evidence type="ECO:0007829" key="18">
    <source>
        <dbReference type="PDB" id="6HGC"/>
    </source>
</evidence>
<feature type="chain" id="PRO_0000395823" description="Ubiquitin carboxyl-terminal hydrolase calypso">
    <location>
        <begin position="1"/>
        <end position="471"/>
    </location>
</feature>
<feature type="domain" description="UCH catalytic" evidence="1 2 7">
    <location>
        <begin position="45"/>
        <end position="276"/>
    </location>
</feature>
<feature type="domain" description="ULD" evidence="3">
    <location>
        <begin position="375"/>
        <end position="403"/>
    </location>
</feature>
<feature type="region of interest" description="Disordered" evidence="4">
    <location>
        <begin position="307"/>
        <end position="326"/>
    </location>
</feature>
<feature type="region of interest" description="Positively charged C-terminal tail required for binding nucleosomes" evidence="7">
    <location>
        <begin position="405"/>
        <end position="471"/>
    </location>
</feature>
<feature type="region of interest" description="Disordered" evidence="4">
    <location>
        <begin position="412"/>
        <end position="471"/>
    </location>
</feature>
<feature type="coiled-coil region" evidence="7">
    <location>
        <begin position="240"/>
        <end position="256"/>
    </location>
</feature>
<feature type="coiled-coil region" evidence="7">
    <location>
        <begin position="298"/>
        <end position="324"/>
    </location>
</feature>
<feature type="compositionally biased region" description="Polar residues" evidence="4">
    <location>
        <begin position="314"/>
        <end position="326"/>
    </location>
</feature>
<feature type="compositionally biased region" description="Low complexity" evidence="4">
    <location>
        <begin position="420"/>
        <end position="447"/>
    </location>
</feature>
<feature type="compositionally biased region" description="Basic residues" evidence="4">
    <location>
        <begin position="457"/>
        <end position="471"/>
    </location>
</feature>
<feature type="active site" description="Nucleophile" evidence="2">
    <location>
        <position position="131"/>
    </location>
</feature>
<feature type="active site" description="Proton donor" evidence="2">
    <location>
        <position position="213"/>
    </location>
</feature>
<feature type="site" description="Transition state stabilizer" evidence="2">
    <location>
        <position position="125"/>
    </location>
</feature>
<feature type="site" description="Important for enzyme activity" evidence="2">
    <location>
        <position position="228"/>
    </location>
</feature>
<feature type="mutagenesis site" description="No effect on homodimerization." evidence="7">
    <original>E</original>
    <variation>A</variation>
    <location>
        <position position="72"/>
    </location>
</feature>
<feature type="mutagenesis site" description="No effect on homodimerization." evidence="7">
    <original>Y</original>
    <variation>A</variation>
    <location>
        <position position="74"/>
    </location>
</feature>
<feature type="mutagenesis site" description="Abolishes deubiquitinase activity without affecting the interaction with Asx or association with nucleosomes." evidence="6 7 8">
    <original>C</original>
    <variation>S</variation>
    <variation>A</variation>
    <location>
        <position position="131"/>
    </location>
</feature>
<feature type="mutagenesis site" description="No effect on homodimerization." evidence="7">
    <original>M</original>
    <variation>A</variation>
    <location>
        <position position="164"/>
    </location>
</feature>
<feature type="mutagenesis site" description="No effect on homodimerization." evidence="7">
    <original>F</original>
    <variation>A</variation>
    <location>
        <position position="269"/>
    </location>
</feature>
<feature type="mutagenesis site" description="Abolishes homodimerization. Severely attenuated deubiquitination of histone H2AK118ub1 substrates." evidence="7">
    <original>M</original>
    <variation>R</variation>
    <location>
        <position position="288"/>
    </location>
</feature>
<feature type="mutagenesis site" description="Abolishes homodimerization. Severely attenuated deubiquitination of histone H2AK118ub1 substrates." evidence="7">
    <original>N</original>
    <variation>R</variation>
    <location>
        <position position="292"/>
    </location>
</feature>
<feature type="mutagenesis site" description="Abolishes homodimerization. Severely attenuated deubiquitination of histone H2AK118ub1 substrates but no effect on intrinsic catalytic activity." evidence="7">
    <original>L</original>
    <variation>A</variation>
    <location>
        <position position="340"/>
    </location>
</feature>
<feature type="mutagenesis site" description="Abrogates binding of the PR-DUB complex to nucleosomes and impairs deubiquitination activity of histone H2AK118ub1 substrates." evidence="7">
    <location>
        <begin position="405"/>
        <end position="471"/>
    </location>
</feature>
<feature type="helix" evidence="18">
    <location>
        <begin position="53"/>
        <end position="62"/>
    </location>
</feature>
<feature type="strand" evidence="18">
    <location>
        <begin position="69"/>
        <end position="72"/>
    </location>
</feature>
<feature type="strand" evidence="18">
    <location>
        <begin position="76"/>
        <end position="78"/>
    </location>
</feature>
<feature type="strand" evidence="18">
    <location>
        <begin position="85"/>
        <end position="90"/>
    </location>
</feature>
<feature type="helix" evidence="18">
    <location>
        <begin position="116"/>
        <end position="119"/>
    </location>
</feature>
<feature type="strand" evidence="18">
    <location>
        <begin position="127"/>
        <end position="129"/>
    </location>
</feature>
<feature type="helix" evidence="18">
    <location>
        <begin position="131"/>
        <end position="140"/>
    </location>
</feature>
<feature type="turn" evidence="18">
    <location>
        <begin position="145"/>
        <end position="147"/>
    </location>
</feature>
<feature type="helix" evidence="18">
    <location>
        <begin position="152"/>
        <end position="160"/>
    </location>
</feature>
<feature type="turn" evidence="17">
    <location>
        <begin position="161"/>
        <end position="163"/>
    </location>
</feature>
<feature type="helix" evidence="18">
    <location>
        <begin position="166"/>
        <end position="174"/>
    </location>
</feature>
<feature type="helix" evidence="18">
    <location>
        <begin position="177"/>
        <end position="184"/>
    </location>
</feature>
<feature type="helix" evidence="18">
    <location>
        <begin position="189"/>
        <end position="194"/>
    </location>
</feature>
<feature type="strand" evidence="18">
    <location>
        <begin position="213"/>
        <end position="219"/>
    </location>
</feature>
<feature type="strand" evidence="18">
    <location>
        <begin position="221"/>
        <end position="227"/>
    </location>
</feature>
<feature type="strand" evidence="18">
    <location>
        <begin position="231"/>
        <end position="233"/>
    </location>
</feature>
<feature type="helix" evidence="18">
    <location>
        <begin position="246"/>
        <end position="257"/>
    </location>
</feature>
<feature type="strand" evidence="18">
    <location>
        <begin position="267"/>
        <end position="275"/>
    </location>
</feature>
<feature type="helix" evidence="18">
    <location>
        <begin position="278"/>
        <end position="306"/>
    </location>
</feature>
<feature type="helix" evidence="18">
    <location>
        <begin position="335"/>
        <end position="372"/>
    </location>
</feature>
<feature type="helix" evidence="18">
    <location>
        <begin position="377"/>
        <end position="389"/>
    </location>
</feature>
<feature type="helix" evidence="18">
    <location>
        <begin position="393"/>
        <end position="399"/>
    </location>
</feature>
<accession>Q7K5N4</accession>
<keyword id="KW-0002">3D-structure</keyword>
<keyword id="KW-0156">Chromatin regulator</keyword>
<keyword id="KW-0175">Coiled coil</keyword>
<keyword id="KW-0378">Hydrolase</keyword>
<keyword id="KW-0539">Nucleus</keyword>
<keyword id="KW-0645">Protease</keyword>
<keyword id="KW-1185">Reference proteome</keyword>
<keyword id="KW-0788">Thiol protease</keyword>
<keyword id="KW-0833">Ubl conjugation pathway</keyword>
<dbReference type="EC" id="3.4.19.12" evidence="6 7 8 9"/>
<dbReference type="EMBL" id="AE013599">
    <property type="protein sequence ID" value="AAF58046.1"/>
    <property type="molecule type" value="Genomic_DNA"/>
</dbReference>
<dbReference type="EMBL" id="AE013599">
    <property type="protein sequence ID" value="AAO41384.1"/>
    <property type="molecule type" value="Genomic_DNA"/>
</dbReference>
<dbReference type="EMBL" id="AY047515">
    <property type="protein sequence ID" value="AAK77247.1"/>
    <property type="molecule type" value="mRNA"/>
</dbReference>
<dbReference type="RefSeq" id="NP_611096.1">
    <property type="nucleotide sequence ID" value="NM_137252.3"/>
</dbReference>
<dbReference type="RefSeq" id="NP_788374.1">
    <property type="nucleotide sequence ID" value="NM_176194.2"/>
</dbReference>
<dbReference type="PDB" id="6CGA">
    <property type="method" value="X-ray"/>
    <property type="resolution" value="3.50 A"/>
    <property type="chains" value="A/C=43-404"/>
</dbReference>
<dbReference type="PDB" id="6HGC">
    <property type="method" value="X-ray"/>
    <property type="resolution" value="3.02 A"/>
    <property type="chains" value="A/B=43-306, A=334-404, B=334-373"/>
</dbReference>
<dbReference type="PDBsum" id="6CGA"/>
<dbReference type="PDBsum" id="6HGC"/>
<dbReference type="SMR" id="Q7K5N4"/>
<dbReference type="BioGRID" id="62514">
    <property type="interactions" value="30"/>
</dbReference>
<dbReference type="ComplexPortal" id="CPX-2577">
    <property type="entry name" value="Polycomb repressive deubiquitinase complex"/>
</dbReference>
<dbReference type="DIP" id="DIP-59274N"/>
<dbReference type="FunCoup" id="Q7K5N4">
    <property type="interactions" value="1240"/>
</dbReference>
<dbReference type="IntAct" id="Q7K5N4">
    <property type="interactions" value="1"/>
</dbReference>
<dbReference type="STRING" id="7227.FBpp0086383"/>
<dbReference type="MEROPS" id="C12.A09"/>
<dbReference type="PaxDb" id="7227-FBpp0086383"/>
<dbReference type="DNASU" id="36794"/>
<dbReference type="EnsemblMetazoa" id="FBtr0087245">
    <property type="protein sequence ID" value="FBpp0086383"/>
    <property type="gene ID" value="FBgn0262166"/>
</dbReference>
<dbReference type="EnsemblMetazoa" id="FBtr0087246">
    <property type="protein sequence ID" value="FBpp0086384"/>
    <property type="gene ID" value="FBgn0262166"/>
</dbReference>
<dbReference type="GeneID" id="36794"/>
<dbReference type="KEGG" id="dme:Dmel_CG8445"/>
<dbReference type="UCSC" id="CG8445-RA">
    <property type="organism name" value="d. melanogaster"/>
</dbReference>
<dbReference type="AGR" id="FB:FBgn0262166"/>
<dbReference type="CTD" id="50632"/>
<dbReference type="FlyBase" id="FBgn0262166">
    <property type="gene designation" value="caly"/>
</dbReference>
<dbReference type="VEuPathDB" id="VectorBase:FBgn0262166"/>
<dbReference type="eggNOG" id="KOG2778">
    <property type="taxonomic scope" value="Eukaryota"/>
</dbReference>
<dbReference type="GeneTree" id="ENSGT00940000156388"/>
<dbReference type="HOGENOM" id="CLU_018316_2_1_1"/>
<dbReference type="InParanoid" id="Q7K5N4"/>
<dbReference type="OMA" id="MNHGCWE"/>
<dbReference type="OrthoDB" id="1924260at2759"/>
<dbReference type="PhylomeDB" id="Q7K5N4"/>
<dbReference type="Reactome" id="R-DME-5689603">
    <property type="pathway name" value="UCH proteinases"/>
</dbReference>
<dbReference type="BioGRID-ORCS" id="36794">
    <property type="hits" value="0 hits in 1 CRISPR screen"/>
</dbReference>
<dbReference type="CD-CODE" id="58FDC23F">
    <property type="entry name" value="PcG body"/>
</dbReference>
<dbReference type="GenomeRNAi" id="36794"/>
<dbReference type="PRO" id="PR:Q7K5N4"/>
<dbReference type="Proteomes" id="UP000000803">
    <property type="component" value="Chromosome 2R"/>
</dbReference>
<dbReference type="Bgee" id="FBgn0262166">
    <property type="expression patterns" value="Expressed in T neuron T4d (Drosophila) in embryonic/larval optic lobe (Drosophila) and 48 other cell types or tissues"/>
</dbReference>
<dbReference type="ExpressionAtlas" id="Q7K5N4">
    <property type="expression patterns" value="baseline and differential"/>
</dbReference>
<dbReference type="GO" id="GO:0000785">
    <property type="term" value="C:chromatin"/>
    <property type="evidence" value="ECO:0000314"/>
    <property type="project" value="UniProtKB"/>
</dbReference>
<dbReference type="GO" id="GO:0005737">
    <property type="term" value="C:cytoplasm"/>
    <property type="evidence" value="ECO:0000318"/>
    <property type="project" value="GO_Central"/>
</dbReference>
<dbReference type="GO" id="GO:0005634">
    <property type="term" value="C:nucleus"/>
    <property type="evidence" value="ECO:0000314"/>
    <property type="project" value="FlyBase"/>
</dbReference>
<dbReference type="GO" id="GO:0035517">
    <property type="term" value="C:PR-DUB complex"/>
    <property type="evidence" value="ECO:0000314"/>
    <property type="project" value="UniProtKB"/>
</dbReference>
<dbReference type="GO" id="GO:0003682">
    <property type="term" value="F:chromatin binding"/>
    <property type="evidence" value="ECO:0000314"/>
    <property type="project" value="UniProtKB"/>
</dbReference>
<dbReference type="GO" id="GO:0004843">
    <property type="term" value="F:cysteine-type deubiquitinase activity"/>
    <property type="evidence" value="ECO:0000314"/>
    <property type="project" value="UniProtKB"/>
</dbReference>
<dbReference type="GO" id="GO:0040029">
    <property type="term" value="P:epigenetic regulation of gene expression"/>
    <property type="evidence" value="ECO:0000314"/>
    <property type="project" value="UniProtKB"/>
</dbReference>
<dbReference type="GO" id="GO:0031507">
    <property type="term" value="P:heterochromatin formation"/>
    <property type="evidence" value="ECO:0000315"/>
    <property type="project" value="UniProtKB"/>
</dbReference>
<dbReference type="GO" id="GO:0007385">
    <property type="term" value="P:specification of segmental identity, abdomen"/>
    <property type="evidence" value="ECO:0000315"/>
    <property type="project" value="FlyBase"/>
</dbReference>
<dbReference type="GO" id="GO:0006511">
    <property type="term" value="P:ubiquitin-dependent protein catabolic process"/>
    <property type="evidence" value="ECO:0007669"/>
    <property type="project" value="InterPro"/>
</dbReference>
<dbReference type="CDD" id="cd09617">
    <property type="entry name" value="Peptidase_C12_UCH37_BAP1"/>
    <property type="match status" value="1"/>
</dbReference>
<dbReference type="DisProt" id="DP02890"/>
<dbReference type="FunFam" id="3.40.532.10:FF:000002">
    <property type="entry name" value="Ubiquitin carboxyl-terminal hydrolase"/>
    <property type="match status" value="1"/>
</dbReference>
<dbReference type="FunFam" id="1.20.58.860:FF:000004">
    <property type="entry name" value="Ubiquitin carboxyl-terminal hydrolase calypso"/>
    <property type="match status" value="1"/>
</dbReference>
<dbReference type="Gene3D" id="1.20.58.860">
    <property type="match status" value="1"/>
</dbReference>
<dbReference type="Gene3D" id="3.40.532.10">
    <property type="entry name" value="Peptidase C12, ubiquitin carboxyl-terminal hydrolase"/>
    <property type="match status" value="1"/>
</dbReference>
<dbReference type="InterPro" id="IPR038765">
    <property type="entry name" value="Papain-like_cys_pep_sf"/>
</dbReference>
<dbReference type="InterPro" id="IPR001578">
    <property type="entry name" value="Peptidase_C12_UCH"/>
</dbReference>
<dbReference type="InterPro" id="IPR036959">
    <property type="entry name" value="Peptidase_C12_UCH_sf"/>
</dbReference>
<dbReference type="InterPro" id="IPR041507">
    <property type="entry name" value="UCH_C"/>
</dbReference>
<dbReference type="PANTHER" id="PTHR10589">
    <property type="entry name" value="UBIQUITIN CARBOXYL-TERMINAL HYDROLASE"/>
    <property type="match status" value="1"/>
</dbReference>
<dbReference type="PANTHER" id="PTHR10589:SF28">
    <property type="entry name" value="UBIQUITIN CARBOXYL-TERMINAL HYDROLASE BAP1"/>
    <property type="match status" value="1"/>
</dbReference>
<dbReference type="Pfam" id="PF01088">
    <property type="entry name" value="Peptidase_C12"/>
    <property type="match status" value="1"/>
</dbReference>
<dbReference type="Pfam" id="PF18031">
    <property type="entry name" value="UCH_C"/>
    <property type="match status" value="1"/>
</dbReference>
<dbReference type="PRINTS" id="PR00707">
    <property type="entry name" value="UBCTHYDRLASE"/>
</dbReference>
<dbReference type="SUPFAM" id="SSF54001">
    <property type="entry name" value="Cysteine proteinases"/>
    <property type="match status" value="1"/>
</dbReference>
<dbReference type="PROSITE" id="PS52048">
    <property type="entry name" value="UCH_DOMAIN"/>
    <property type="match status" value="1"/>
</dbReference>
<dbReference type="PROSITE" id="PS52049">
    <property type="entry name" value="ULD"/>
    <property type="match status" value="1"/>
</dbReference>
<name>CALYP_DROME</name>
<proteinExistence type="evidence at protein level"/>